<name>REHYB_ORYSI</name>
<proteinExistence type="inferred from homology"/>
<gene>
    <name type="ORF">OsI_026085</name>
</gene>
<protein>
    <recommendedName>
        <fullName>1-Cys peroxiredoxin B</fullName>
        <shortName>1-Cys Prx B</shortName>
        <ecNumber evidence="3">1.11.1.24</ecNumber>
    </recommendedName>
    <alternativeName>
        <fullName>Thioredoxin peroxidase B</fullName>
    </alternativeName>
    <alternativeName>
        <fullName evidence="6">Thioredoxin-dependent peroxiredoxin B</fullName>
    </alternativeName>
</protein>
<evidence type="ECO:0000250" key="1">
    <source>
        <dbReference type="UniProtKB" id="O04005"/>
    </source>
</evidence>
<evidence type="ECO:0000250" key="2">
    <source>
        <dbReference type="UniProtKB" id="O35244"/>
    </source>
</evidence>
<evidence type="ECO:0000250" key="3">
    <source>
        <dbReference type="UniProtKB" id="P30041"/>
    </source>
</evidence>
<evidence type="ECO:0000255" key="4"/>
<evidence type="ECO:0000255" key="5">
    <source>
        <dbReference type="PROSITE-ProRule" id="PRU00691"/>
    </source>
</evidence>
<evidence type="ECO:0000305" key="6"/>
<organism>
    <name type="scientific">Oryza sativa subsp. indica</name>
    <name type="common">Rice</name>
    <dbReference type="NCBI Taxonomy" id="39946"/>
    <lineage>
        <taxon>Eukaryota</taxon>
        <taxon>Viridiplantae</taxon>
        <taxon>Streptophyta</taxon>
        <taxon>Embryophyta</taxon>
        <taxon>Tracheophyta</taxon>
        <taxon>Spermatophyta</taxon>
        <taxon>Magnoliopsida</taxon>
        <taxon>Liliopsida</taxon>
        <taxon>Poales</taxon>
        <taxon>Poaceae</taxon>
        <taxon>BOP clade</taxon>
        <taxon>Oryzoideae</taxon>
        <taxon>Oryzeae</taxon>
        <taxon>Oryzinae</taxon>
        <taxon>Oryza</taxon>
        <taxon>Oryza sativa</taxon>
    </lineage>
</organism>
<sequence length="220" mass="24205">MPGLTLGDVVPDLELDTTHGKIRLHDFVGDAYAIIFSHPADFTPVCTTELSEMAGYAGEFDKRGVKLLGFSCDDVESHKDWIKDIEAYKPGRRVGFPIVADPDREAIRQLNMIDADEKDTAGGELPNRALHIVGPDKKVKLSFLFPACTGRNMAEVLRATDALLTAARHRVATPVNWKPGERVVIPPGVSDEEAKARFPAGFETAQLPSNKCYLRFTQVD</sequence>
<reference key="1">
    <citation type="journal article" date="2005" name="PLoS Biol.">
        <title>The genomes of Oryza sativa: a history of duplications.</title>
        <authorList>
            <person name="Yu J."/>
            <person name="Wang J."/>
            <person name="Lin W."/>
            <person name="Li S."/>
            <person name="Li H."/>
            <person name="Zhou J."/>
            <person name="Ni P."/>
            <person name="Dong W."/>
            <person name="Hu S."/>
            <person name="Zeng C."/>
            <person name="Zhang J."/>
            <person name="Zhang Y."/>
            <person name="Li R."/>
            <person name="Xu Z."/>
            <person name="Li S."/>
            <person name="Li X."/>
            <person name="Zheng H."/>
            <person name="Cong L."/>
            <person name="Lin L."/>
            <person name="Yin J."/>
            <person name="Geng J."/>
            <person name="Li G."/>
            <person name="Shi J."/>
            <person name="Liu J."/>
            <person name="Lv H."/>
            <person name="Li J."/>
            <person name="Wang J."/>
            <person name="Deng Y."/>
            <person name="Ran L."/>
            <person name="Shi X."/>
            <person name="Wang X."/>
            <person name="Wu Q."/>
            <person name="Li C."/>
            <person name="Ren X."/>
            <person name="Wang J."/>
            <person name="Wang X."/>
            <person name="Li D."/>
            <person name="Liu D."/>
            <person name="Zhang X."/>
            <person name="Ji Z."/>
            <person name="Zhao W."/>
            <person name="Sun Y."/>
            <person name="Zhang Z."/>
            <person name="Bao J."/>
            <person name="Han Y."/>
            <person name="Dong L."/>
            <person name="Ji J."/>
            <person name="Chen P."/>
            <person name="Wu S."/>
            <person name="Liu J."/>
            <person name="Xiao Y."/>
            <person name="Bu D."/>
            <person name="Tan J."/>
            <person name="Yang L."/>
            <person name="Ye C."/>
            <person name="Zhang J."/>
            <person name="Xu J."/>
            <person name="Zhou Y."/>
            <person name="Yu Y."/>
            <person name="Zhang B."/>
            <person name="Zhuang S."/>
            <person name="Wei H."/>
            <person name="Liu B."/>
            <person name="Lei M."/>
            <person name="Yu H."/>
            <person name="Li Y."/>
            <person name="Xu H."/>
            <person name="Wei S."/>
            <person name="He X."/>
            <person name="Fang L."/>
            <person name="Zhang Z."/>
            <person name="Zhang Y."/>
            <person name="Huang X."/>
            <person name="Su Z."/>
            <person name="Tong W."/>
            <person name="Li J."/>
            <person name="Tong Z."/>
            <person name="Li S."/>
            <person name="Ye J."/>
            <person name="Wang L."/>
            <person name="Fang L."/>
            <person name="Lei T."/>
            <person name="Chen C.-S."/>
            <person name="Chen H.-C."/>
            <person name="Xu Z."/>
            <person name="Li H."/>
            <person name="Huang H."/>
            <person name="Zhang F."/>
            <person name="Xu H."/>
            <person name="Li N."/>
            <person name="Zhao C."/>
            <person name="Li S."/>
            <person name="Dong L."/>
            <person name="Huang Y."/>
            <person name="Li L."/>
            <person name="Xi Y."/>
            <person name="Qi Q."/>
            <person name="Li W."/>
            <person name="Zhang B."/>
            <person name="Hu W."/>
            <person name="Zhang Y."/>
            <person name="Tian X."/>
            <person name="Jiao Y."/>
            <person name="Liang X."/>
            <person name="Jin J."/>
            <person name="Gao L."/>
            <person name="Zheng W."/>
            <person name="Hao B."/>
            <person name="Liu S.-M."/>
            <person name="Wang W."/>
            <person name="Yuan L."/>
            <person name="Cao M."/>
            <person name="McDermott J."/>
            <person name="Samudrala R."/>
            <person name="Wang J."/>
            <person name="Wong G.K.-S."/>
            <person name="Yang H."/>
        </authorList>
    </citation>
    <scope>NUCLEOTIDE SEQUENCE [LARGE SCALE GENOMIC DNA]</scope>
    <source>
        <strain>cv. 93-11</strain>
    </source>
</reference>
<comment type="function">
    <text evidence="1 3">Thiol-specific peroxidase that catalyzes the reduction of hydrogen peroxide and organic hydroperoxides to water and alcohols, respectively (By similarity). Seems to contribute to the inhibition of germination during stress (By similarity).</text>
</comment>
<comment type="catalytic activity">
    <reaction evidence="3">
        <text>a hydroperoxide + [thioredoxin]-dithiol = an alcohol + [thioredoxin]-disulfide + H2O</text>
        <dbReference type="Rhea" id="RHEA:62620"/>
        <dbReference type="Rhea" id="RHEA-COMP:10698"/>
        <dbReference type="Rhea" id="RHEA-COMP:10700"/>
        <dbReference type="ChEBI" id="CHEBI:15377"/>
        <dbReference type="ChEBI" id="CHEBI:29950"/>
        <dbReference type="ChEBI" id="CHEBI:30879"/>
        <dbReference type="ChEBI" id="CHEBI:35924"/>
        <dbReference type="ChEBI" id="CHEBI:50058"/>
        <dbReference type="EC" id="1.11.1.24"/>
    </reaction>
</comment>
<comment type="subcellular location">
    <subcellularLocation>
        <location evidence="1">Nucleus</location>
    </subcellularLocation>
    <subcellularLocation>
        <location evidence="1">Cytoplasm</location>
    </subcellularLocation>
</comment>
<comment type="miscellaneous">
    <text evidence="2">The active site is a conserved redox-active cysteine residue, the peroxidatic cysteine (C(P)), which makes the nucleophilic attack on the peroxide substrate. The peroxide oxidizes the C(P)-SH to cysteine sulfenic acid (C(P)-SOH), which then reacts with another cysteine residue, the resolving cysteine (C(R)), to form a disulfide bridge. The disulfide is subsequently reduced by an appropriate electron donor to complete the catalytic cycle. In this 1-Cys peroxiredoxin, no C(R) is present and C(P) instead forms a disulfide with a cysteine from another protein or with a small thiol molecule.</text>
</comment>
<comment type="similarity">
    <text evidence="6">Belongs to the peroxiredoxin family. Prx6 subfamily.</text>
</comment>
<accession>P0C5D0</accession>
<accession>A2YP42</accession>
<accession>Q8GVG9</accession>
<dbReference type="EC" id="1.11.1.24" evidence="3"/>
<dbReference type="EMBL" id="CM000132">
    <property type="protein sequence ID" value="EAZ04853.1"/>
    <property type="molecule type" value="Genomic_DNA"/>
</dbReference>
<dbReference type="SMR" id="P0C5D0"/>
<dbReference type="STRING" id="39946.P0C5D0"/>
<dbReference type="PeroxiBase" id="5149">
    <property type="entry name" value="Osi1CysPrx02"/>
</dbReference>
<dbReference type="EnsemblPlants" id="BGIOSGA026226-TA">
    <property type="protein sequence ID" value="BGIOSGA026226-PA"/>
    <property type="gene ID" value="BGIOSGA026226"/>
</dbReference>
<dbReference type="EnsemblPlants" id="OsGoSa_07g0024640.01">
    <property type="protein sequence ID" value="OsGoSa_07g0024640.01"/>
    <property type="gene ID" value="OsGoSa_07g0024640"/>
</dbReference>
<dbReference type="EnsemblPlants" id="OsIR64_07g0025320.01">
    <property type="protein sequence ID" value="OsIR64_07g0025320.01"/>
    <property type="gene ID" value="OsIR64_07g0025320"/>
</dbReference>
<dbReference type="EnsemblPlants" id="OsKYG_07g0024710.01">
    <property type="protein sequence ID" value="OsKYG_07g0024710.01"/>
    <property type="gene ID" value="OsKYG_07g0024710"/>
</dbReference>
<dbReference type="EnsemblPlants" id="OsLaMu_07g0024550.01">
    <property type="protein sequence ID" value="OsLaMu_07g0024550.01"/>
    <property type="gene ID" value="OsLaMu_07g0024550"/>
</dbReference>
<dbReference type="EnsemblPlants" id="OsLima_07g0024600.01">
    <property type="protein sequence ID" value="OsLima_07g0024600.01"/>
    <property type="gene ID" value="OsLima_07g0024600"/>
</dbReference>
<dbReference type="EnsemblPlants" id="OsLiXu_07g0024850.01">
    <property type="protein sequence ID" value="OsLiXu_07g0024850.01"/>
    <property type="gene ID" value="OsLiXu_07g0024850"/>
</dbReference>
<dbReference type="EnsemblPlants" id="OsMH63_07G024580_01">
    <property type="protein sequence ID" value="OsMH63_07G024580_01"/>
    <property type="gene ID" value="OsMH63_07G024580"/>
</dbReference>
<dbReference type="EnsemblPlants" id="OsPr106_07g0024790.01">
    <property type="protein sequence ID" value="OsPr106_07g0024790.01"/>
    <property type="gene ID" value="OsPr106_07g0024790"/>
</dbReference>
<dbReference type="EnsemblPlants" id="OsZS97_07G024410_01">
    <property type="protein sequence ID" value="OsZS97_07G024410_01"/>
    <property type="gene ID" value="OsZS97_07G024410"/>
</dbReference>
<dbReference type="Gramene" id="BGIOSGA026226-TA">
    <property type="protein sequence ID" value="BGIOSGA026226-PA"/>
    <property type="gene ID" value="BGIOSGA026226"/>
</dbReference>
<dbReference type="Gramene" id="OsGoSa_07g0024640.01">
    <property type="protein sequence ID" value="OsGoSa_07g0024640.01"/>
    <property type="gene ID" value="OsGoSa_07g0024640"/>
</dbReference>
<dbReference type="Gramene" id="OsIR64_07g0025320.01">
    <property type="protein sequence ID" value="OsIR64_07g0025320.01"/>
    <property type="gene ID" value="OsIR64_07g0025320"/>
</dbReference>
<dbReference type="Gramene" id="OsKYG_07g0024710.01">
    <property type="protein sequence ID" value="OsKYG_07g0024710.01"/>
    <property type="gene ID" value="OsKYG_07g0024710"/>
</dbReference>
<dbReference type="Gramene" id="OsLaMu_07g0024550.01">
    <property type="protein sequence ID" value="OsLaMu_07g0024550.01"/>
    <property type="gene ID" value="OsLaMu_07g0024550"/>
</dbReference>
<dbReference type="Gramene" id="OsLima_07g0024600.01">
    <property type="protein sequence ID" value="OsLima_07g0024600.01"/>
    <property type="gene ID" value="OsLima_07g0024600"/>
</dbReference>
<dbReference type="Gramene" id="OsLiXu_07g0024850.01">
    <property type="protein sequence ID" value="OsLiXu_07g0024850.01"/>
    <property type="gene ID" value="OsLiXu_07g0024850"/>
</dbReference>
<dbReference type="Gramene" id="OsMH63_07G024580_01">
    <property type="protein sequence ID" value="OsMH63_07G024580_01"/>
    <property type="gene ID" value="OsMH63_07G024580"/>
</dbReference>
<dbReference type="Gramene" id="OsPr106_07g0024790.01">
    <property type="protein sequence ID" value="OsPr106_07g0024790.01"/>
    <property type="gene ID" value="OsPr106_07g0024790"/>
</dbReference>
<dbReference type="Gramene" id="OsZS97_07G024410_01">
    <property type="protein sequence ID" value="OsZS97_07G024410_01"/>
    <property type="gene ID" value="OsZS97_07G024410"/>
</dbReference>
<dbReference type="HOGENOM" id="CLU_042529_4_1_1"/>
<dbReference type="OMA" id="RLTMLYP"/>
<dbReference type="OrthoDB" id="2996783at2759"/>
<dbReference type="Proteomes" id="UP000007015">
    <property type="component" value="Chromosome 7"/>
</dbReference>
<dbReference type="GO" id="GO:0005829">
    <property type="term" value="C:cytosol"/>
    <property type="evidence" value="ECO:0007669"/>
    <property type="project" value="TreeGrafter"/>
</dbReference>
<dbReference type="GO" id="GO:0005739">
    <property type="term" value="C:mitochondrion"/>
    <property type="evidence" value="ECO:0007669"/>
    <property type="project" value="TreeGrafter"/>
</dbReference>
<dbReference type="GO" id="GO:0005634">
    <property type="term" value="C:nucleus"/>
    <property type="evidence" value="ECO:0007669"/>
    <property type="project" value="UniProtKB-SubCell"/>
</dbReference>
<dbReference type="GO" id="GO:0140824">
    <property type="term" value="F:thioredoxin-dependent peroxiredoxin activity"/>
    <property type="evidence" value="ECO:0007669"/>
    <property type="project" value="UniProtKB-EC"/>
</dbReference>
<dbReference type="GO" id="GO:0045454">
    <property type="term" value="P:cell redox homeostasis"/>
    <property type="evidence" value="ECO:0007669"/>
    <property type="project" value="TreeGrafter"/>
</dbReference>
<dbReference type="CDD" id="cd03016">
    <property type="entry name" value="PRX_1cys"/>
    <property type="match status" value="1"/>
</dbReference>
<dbReference type="FunFam" id="3.30.1020.10:FF:000001">
    <property type="entry name" value="1-Cys peroxiredoxin"/>
    <property type="match status" value="1"/>
</dbReference>
<dbReference type="FunFam" id="3.40.30.10:FF:000011">
    <property type="entry name" value="Peroxiredoxin PRX1"/>
    <property type="match status" value="1"/>
</dbReference>
<dbReference type="Gene3D" id="3.30.1020.10">
    <property type="entry name" value="Antioxidant, Horf6, Chain A, domain2"/>
    <property type="match status" value="1"/>
</dbReference>
<dbReference type="Gene3D" id="3.40.30.10">
    <property type="entry name" value="Glutaredoxin"/>
    <property type="match status" value="1"/>
</dbReference>
<dbReference type="InterPro" id="IPR000866">
    <property type="entry name" value="AhpC/TSA"/>
</dbReference>
<dbReference type="InterPro" id="IPR024706">
    <property type="entry name" value="Peroxiredoxin_AhpC-typ"/>
</dbReference>
<dbReference type="InterPro" id="IPR019479">
    <property type="entry name" value="Peroxiredoxin_C"/>
</dbReference>
<dbReference type="InterPro" id="IPR045020">
    <property type="entry name" value="PRX_1cys"/>
</dbReference>
<dbReference type="InterPro" id="IPR036249">
    <property type="entry name" value="Thioredoxin-like_sf"/>
</dbReference>
<dbReference type="InterPro" id="IPR013766">
    <property type="entry name" value="Thioredoxin_domain"/>
</dbReference>
<dbReference type="PANTHER" id="PTHR43503">
    <property type="entry name" value="MCG48959-RELATED"/>
    <property type="match status" value="1"/>
</dbReference>
<dbReference type="PANTHER" id="PTHR43503:SF4">
    <property type="entry name" value="PEROXIREDOXIN-6"/>
    <property type="match status" value="1"/>
</dbReference>
<dbReference type="Pfam" id="PF10417">
    <property type="entry name" value="1-cysPrx_C"/>
    <property type="match status" value="1"/>
</dbReference>
<dbReference type="Pfam" id="PF00578">
    <property type="entry name" value="AhpC-TSA"/>
    <property type="match status" value="1"/>
</dbReference>
<dbReference type="PIRSF" id="PIRSF000239">
    <property type="entry name" value="AHPC"/>
    <property type="match status" value="1"/>
</dbReference>
<dbReference type="SUPFAM" id="SSF52833">
    <property type="entry name" value="Thioredoxin-like"/>
    <property type="match status" value="1"/>
</dbReference>
<dbReference type="PROSITE" id="PS51352">
    <property type="entry name" value="THIOREDOXIN_2"/>
    <property type="match status" value="1"/>
</dbReference>
<feature type="chain" id="PRO_0000300261" description="1-Cys peroxiredoxin B">
    <location>
        <begin position="1"/>
        <end position="220"/>
    </location>
</feature>
<feature type="domain" description="Thioredoxin" evidence="5">
    <location>
        <begin position="4"/>
        <end position="165"/>
    </location>
</feature>
<feature type="short sequence motif" description="Bipartite nuclear localization signal" evidence="4">
    <location>
        <begin position="195"/>
        <end position="218"/>
    </location>
</feature>
<feature type="active site" description="Cysteine sulfenic acid (-SOH) intermediate" evidence="3">
    <location>
        <position position="46"/>
    </location>
</feature>
<keyword id="KW-0049">Antioxidant</keyword>
<keyword id="KW-0963">Cytoplasm</keyword>
<keyword id="KW-0539">Nucleus</keyword>
<keyword id="KW-0560">Oxidoreductase</keyword>
<keyword id="KW-0575">Peroxidase</keyword>
<keyword id="KW-0676">Redox-active center</keyword>
<keyword id="KW-1185">Reference proteome</keyword>